<reference key="1">
    <citation type="journal article" date="1991" name="Infect. Immun.">
        <title>Sequence and structural analysis of surface protein antigen I/II (SpaA) of Streptococcus sobrinus.</title>
        <authorList>
            <person name="Lapolla R.J."/>
            <person name="Haron J.A."/>
            <person name="Kelly C.G."/>
            <person name="Taylor W.R."/>
            <person name="Bohart C."/>
            <person name="Hendricks M."/>
            <person name="Pyati J."/>
            <person name="Graff R.T."/>
            <person name="Ma J.K.-C."/>
            <person name="Lehner T."/>
        </authorList>
    </citation>
    <scope>NUCLEOTIDE SEQUENCE [GENOMIC DNA]</scope>
    <source>
        <strain>6715 / Serotype G</strain>
    </source>
</reference>
<reference key="2">
    <citation type="journal article" date="1990" name="J. Bacteriol.">
        <title>Regions of the Streptococcus sobrinus spaA gene encoding major determinants of antigen I.</title>
        <authorList>
            <person name="Goldschmidt R.M."/>
            <person name="Thoren-Gordon M."/>
            <person name="Curtiss R. III"/>
        </authorList>
    </citation>
    <scope>NUCLEOTIDE SEQUENCE [GENOMIC DNA] OF 423-817</scope>
</reference>
<dbReference type="EMBL" id="X57841">
    <property type="protein sequence ID" value="CAA40973.1"/>
    <property type="molecule type" value="Genomic_DNA"/>
</dbReference>
<dbReference type="EMBL" id="M38210">
    <property type="protein sequence ID" value="AAA26977.1"/>
    <property type="molecule type" value="Genomic_DNA"/>
</dbReference>
<dbReference type="SMR" id="P21979"/>
<dbReference type="GO" id="GO:0005576">
    <property type="term" value="C:extracellular region"/>
    <property type="evidence" value="ECO:0007669"/>
    <property type="project" value="UniProtKB-KW"/>
</dbReference>
<dbReference type="FunFam" id="2.60.40.740:FF:000001">
    <property type="entry name" value="Major cell-surface adhesin PAc"/>
    <property type="match status" value="1"/>
</dbReference>
<dbReference type="Gene3D" id="2.60.40.740">
    <property type="match status" value="3"/>
</dbReference>
<dbReference type="Gene3D" id="6.10.250.2200">
    <property type="match status" value="4"/>
</dbReference>
<dbReference type="Gene3D" id="2.60.530.10">
    <property type="entry name" value="Major cell-surface adhesin PAc"/>
    <property type="match status" value="1"/>
</dbReference>
<dbReference type="InterPro" id="IPR026345">
    <property type="entry name" value="Adh_isopep-form_adh_dom"/>
</dbReference>
<dbReference type="InterPro" id="IPR041324">
    <property type="entry name" value="AgI/II_N"/>
</dbReference>
<dbReference type="InterPro" id="IPR032300">
    <property type="entry name" value="Antigen_C"/>
</dbReference>
<dbReference type="InterPro" id="IPR013574">
    <property type="entry name" value="Glucan-bd_C/Surface_Ag-I/II_V"/>
</dbReference>
<dbReference type="InterPro" id="IPR019931">
    <property type="entry name" value="LPXTG_anchor"/>
</dbReference>
<dbReference type="InterPro" id="IPR036234">
    <property type="entry name" value="SA_I/II_PAC_V_sf"/>
</dbReference>
<dbReference type="InterPro" id="IPR009578">
    <property type="entry name" value="Surface_Ag_I_II_A_rpt"/>
</dbReference>
<dbReference type="NCBIfam" id="TIGR04228">
    <property type="entry name" value="isopep_sspB_C2"/>
    <property type="match status" value="1"/>
</dbReference>
<dbReference type="NCBIfam" id="TIGR01167">
    <property type="entry name" value="LPXTG_anchor"/>
    <property type="match status" value="1"/>
</dbReference>
<dbReference type="NCBIfam" id="NF033804">
    <property type="entry name" value="Streccoc_I_II"/>
    <property type="match status" value="2"/>
</dbReference>
<dbReference type="Pfam" id="PF18652">
    <property type="entry name" value="Adhesin_P1_N"/>
    <property type="match status" value="1"/>
</dbReference>
<dbReference type="Pfam" id="PF17998">
    <property type="entry name" value="AgI_II_C2"/>
    <property type="match status" value="1"/>
</dbReference>
<dbReference type="Pfam" id="PF16364">
    <property type="entry name" value="Antigen_C"/>
    <property type="match status" value="1"/>
</dbReference>
<dbReference type="Pfam" id="PF08363">
    <property type="entry name" value="GbpC"/>
    <property type="match status" value="1"/>
</dbReference>
<dbReference type="Pfam" id="PF00746">
    <property type="entry name" value="Gram_pos_anchor"/>
    <property type="match status" value="1"/>
</dbReference>
<dbReference type="Pfam" id="PF06696">
    <property type="entry name" value="Strep_SA_rep"/>
    <property type="match status" value="2"/>
</dbReference>
<dbReference type="SUPFAM" id="SSF74914">
    <property type="entry name" value="V-region of surface antigen I/II (SA I/II, PAC)"/>
    <property type="match status" value="1"/>
</dbReference>
<dbReference type="PROSITE" id="PS51965">
    <property type="entry name" value="AG_I_II_AR"/>
    <property type="match status" value="4"/>
</dbReference>
<dbReference type="PROSITE" id="PS50847">
    <property type="entry name" value="GRAM_POS_ANCHORING"/>
    <property type="match status" value="1"/>
</dbReference>
<sequence>MLQKCKLEGIIICNEKRLLGAAKVKSGRTLSGALLGTAILASGAGQKALAEETSTTSTSGGDTAVVGTETGNPATNLPDKQDNPSSQAETSQAQARQKTGAMSVDVSTSELDEAAKSPQEAGVTVSQDATVNKGTVEPSDEANQKEPEIKDDYSKQAADIQKATEDYKASVAANQAETDRINQEIAAKKAQYEQDLAANKAEVERSLMRMRKPRPIYEAKLAQNQKDLAAIQQANSDSQAAYAAAKEAYDKEWARVQAANAAAKKAYEEALAANTAKNDQIKAEIEAIQQRSAKADYEAKLAQYEKDLAAAQAGNAANEADYQAKKAAYEQELARVQAANAAAKQAYEQALAANSAKNAQITAENEAIQQNAQAKADYEAKLAQYQKDLAAAQSGNAANEADYQEKLAAYEKELARVQAANAAAKQAYEQQVQQANAKNAEITEANRAIRERNAKAKTDYELKLSKYQEELAQYKKDLAEYPAKLQAYQDEQAAIKAALAELEKHKNEDGNLSEPSAQSLVYDLEPNAQVALVTDGKLLKASALDEAFSHDEKNYNNHLLQPDNLNVTYLEQADDVASSVELFGNFGDKAGWTTTVSNGAEVKFASVLLKRGQSATATYTNLKNSYYNGKKISKVVYKYTVDPDSKFQNPTGNVWLGIFTDPTLGVFASAYTGQNEKDTSIFIKNEFTFYDEDGNPIDFDNALLSVASLNREHNSIEMAKDYSGTFVKISGSSIGEKNGMIYATDTLNFKKGEGGSLHTMYTRASEPGSGWDSADAPNSWYGAGAVRMSGPNNYITLGATSATNVLSLAEMPQVPGKDNTAGKKPNIWYSLNGKIRAVNVPKVTKEKPTPPVEPTKPDEPTYEVEKELVDLPVEPKYEPEPTPPSKNPDQSIPEKPVEPTYEVEKELEPAPVEPSYEKEPTPPQSTPDQEEPEKPVEPSYQSLPTPPVEPVYETVPGPVSVPTVRYHYYKLAVQPGVTKEIKNQDDLDIDKTLVAKQSTVKFQLKTADLPAGRPETTSFVLMDPLPSGYQLNLEATKVASPGFEASYDAMTHTVTFTATAETLAALNQDLTKAVATIYPTVVGQVLNDGATYTNNFTLMVNDAYGIKSNIVRVTTPGKPNDPDNPSNNYITPHKVNKNENGVVIDGKSVLAGTTNYYELTWDLDQYKGDKSAKEIIQKGFFYVDDYPEEALDLRTDLIKLTDANGKAVTGVSVADYASLEAAPAAVQDMLKKANIIPKGAFQVFTADDPQAFYDAYVVTGTDLTIVTPMTVKAEMGKTGGSYENRAYQIDFGNGYESNLVVNNVPKINPEKDVTLTMDPADSTNVDGQTIALNQVFNYRLIGGIIPADHAEELFEYSFSDDYDQTGDQYTGQYKAFAKVDLTLKDGTIIKAGTDLTSYTEAQVDEANGQIVVTFKEDFLRSVSVDSAFQAEVYLQMKRIAVGTFANTYVNTVNGITYSSNTVRTSTPEPKQPSPVDPKTTTTVVFQPRQGKAYQPAPPAGAQLPATGDSSNAYLPLLGLVSLTAGFSC</sequence>
<keyword id="KW-0134">Cell wall</keyword>
<keyword id="KW-0572">Peptidoglycan-anchor</keyword>
<keyword id="KW-0677">Repeat</keyword>
<keyword id="KW-0964">Secreted</keyword>
<keyword id="KW-0732">Signal</keyword>
<gene>
    <name evidence="5" type="primary">spaA</name>
</gene>
<proteinExistence type="inferred from homology"/>
<comment type="subcellular location">
    <subcellularLocation>
        <location evidence="2">Secreted</location>
        <location evidence="2">Cell wall</location>
        <topology evidence="2">Peptidoglycan-anchor</topology>
    </subcellularLocation>
</comment>
<comment type="miscellaneous">
    <text>Immunodominant determinants are located in the C-terminal two-thirds of the SpaA protein.</text>
</comment>
<comment type="similarity">
    <text evidence="6">Belongs to the antigen I/II family.</text>
</comment>
<protein>
    <recommendedName>
        <fullName evidence="5">Cell surface antigen I/II</fullName>
    </recommendedName>
    <alternativeName>
        <fullName evidence="5">Surface protein antigen A</fullName>
    </alternativeName>
    <component>
        <recommendedName>
            <fullName>Cell surface antigen II</fullName>
        </recommendedName>
    </component>
</protein>
<name>SPAA_STRDO</name>
<feature type="signal peptide" evidence="1">
    <location>
        <begin position="1"/>
        <end position="50"/>
    </location>
</feature>
<feature type="chain" id="PRO_0000005666" description="Cell surface antigen I/II">
    <location>
        <begin position="51"/>
        <end status="unknown"/>
    </location>
</feature>
<feature type="chain" id="PRO_0000005667" description="Cell surface antigen II">
    <location>
        <begin status="unknown"/>
        <end position="1506"/>
    </location>
</feature>
<feature type="propeptide" id="PRO_0000005668" description="Removed by sortase" evidence="2">
    <location>
        <begin position="1507"/>
        <end position="1528"/>
    </location>
</feature>
<feature type="repeat" description="Ag I/II A 1" evidence="3">
    <location>
        <begin position="161"/>
        <end position="235"/>
    </location>
</feature>
<feature type="repeat" description="Ag I/II A 2" evidence="3">
    <location>
        <begin position="236"/>
        <end position="315"/>
    </location>
</feature>
<feature type="repeat" description="Ag I/II A 3" evidence="3">
    <location>
        <begin position="316"/>
        <end position="396"/>
    </location>
</feature>
<feature type="repeat" description="Ag I/II A 4" evidence="3">
    <location>
        <begin position="397"/>
        <end position="478"/>
    </location>
</feature>
<feature type="region of interest" description="Disordered" evidence="4">
    <location>
        <begin position="50"/>
        <end position="156"/>
    </location>
</feature>
<feature type="region of interest" description="Disordered" evidence="4">
    <location>
        <begin position="840"/>
        <end position="951"/>
    </location>
</feature>
<feature type="region of interest" description="Disordered" evidence="4">
    <location>
        <begin position="1459"/>
        <end position="1480"/>
    </location>
</feature>
<feature type="short sequence motif" description="LPXTG sorting signal" evidence="2">
    <location>
        <begin position="1503"/>
        <end position="1507"/>
    </location>
</feature>
<feature type="compositionally biased region" description="Low complexity" evidence="4">
    <location>
        <begin position="51"/>
        <end position="68"/>
    </location>
</feature>
<feature type="compositionally biased region" description="Polar residues" evidence="4">
    <location>
        <begin position="83"/>
        <end position="97"/>
    </location>
</feature>
<feature type="compositionally biased region" description="Polar residues" evidence="4">
    <location>
        <begin position="124"/>
        <end position="133"/>
    </location>
</feature>
<feature type="compositionally biased region" description="Basic and acidic residues" evidence="4">
    <location>
        <begin position="142"/>
        <end position="154"/>
    </location>
</feature>
<feature type="compositionally biased region" description="Basic and acidic residues" evidence="4">
    <location>
        <begin position="855"/>
        <end position="879"/>
    </location>
</feature>
<feature type="compositionally biased region" description="Polar residues" evidence="4">
    <location>
        <begin position="1459"/>
        <end position="1468"/>
    </location>
</feature>
<feature type="modified residue" description="Pentaglycyl murein peptidoglycan amidated threonine" evidence="2">
    <location>
        <position position="1506"/>
    </location>
</feature>
<feature type="sequence conflict" description="In Ref. 2; AAA26977." evidence="6" ref="2">
    <original>A</original>
    <variation>E</variation>
    <location>
        <position position="427"/>
    </location>
</feature>
<feature type="sequence conflict" description="In Ref. 2; AAA26977." evidence="6" ref="2">
    <original>Q</original>
    <variation>K</variation>
    <location>
        <position position="431"/>
    </location>
</feature>
<feature type="sequence conflict" description="In Ref. 2; AAA26977." evidence="6" ref="2">
    <original>Q</original>
    <variation>K</variation>
    <location>
        <position position="434"/>
    </location>
</feature>
<feature type="sequence conflict" description="In Ref. 2; AAA26977." evidence="6" ref="2">
    <original>A</original>
    <variation>S</variation>
    <location>
        <position position="531"/>
    </location>
</feature>
<feature type="sequence conflict" description="In Ref. 2; AAA26977." evidence="6" ref="2">
    <original>A</original>
    <variation>S</variation>
    <location>
        <position position="600"/>
    </location>
</feature>
<evidence type="ECO:0000255" key="1"/>
<evidence type="ECO:0000255" key="2">
    <source>
        <dbReference type="PROSITE-ProRule" id="PRU00477"/>
    </source>
</evidence>
<evidence type="ECO:0000255" key="3">
    <source>
        <dbReference type="PROSITE-ProRule" id="PRU01310"/>
    </source>
</evidence>
<evidence type="ECO:0000256" key="4">
    <source>
        <dbReference type="SAM" id="MobiDB-lite"/>
    </source>
</evidence>
<evidence type="ECO:0000303" key="5">
    <source>
    </source>
</evidence>
<evidence type="ECO:0000305" key="6"/>
<organism>
    <name type="scientific">Streptococcus downei</name>
    <name type="common">Streptococcus sobrinus</name>
    <dbReference type="NCBI Taxonomy" id="1317"/>
    <lineage>
        <taxon>Bacteria</taxon>
        <taxon>Bacillati</taxon>
        <taxon>Bacillota</taxon>
        <taxon>Bacilli</taxon>
        <taxon>Lactobacillales</taxon>
        <taxon>Streptococcaceae</taxon>
        <taxon>Streptococcus</taxon>
    </lineage>
</organism>
<accession>P21979</accession>